<name>HSP1_TRAGE</name>
<reference key="1">
    <citation type="submission" date="2000-08" db="EMBL/GenBank/DDBJ databases">
        <title>Molecular systematics of the langurs.</title>
        <authorList>
            <person name="Karanth P.K."/>
            <person name="Singh L."/>
            <person name="Stewart C.-B."/>
        </authorList>
    </citation>
    <scope>NUCLEOTIDE SEQUENCE [GENOMIC DNA]</scope>
    <source>
        <strain>Isolate GL1</strain>
    </source>
</reference>
<keyword id="KW-0158">Chromosome</keyword>
<keyword id="KW-0217">Developmental protein</keyword>
<keyword id="KW-0221">Differentiation</keyword>
<keyword id="KW-0226">DNA condensation</keyword>
<keyword id="KW-0238">DNA-binding</keyword>
<keyword id="KW-0544">Nucleosome core</keyword>
<keyword id="KW-0539">Nucleus</keyword>
<keyword id="KW-0744">Spermatogenesis</keyword>
<proteinExistence type="evidence at transcript level"/>
<feature type="chain" id="PRO_0000191581" description="Sperm protamine P1">
    <location>
        <begin position="1"/>
        <end position="51"/>
    </location>
</feature>
<accession>Q7JHM8</accession>
<dbReference type="EMBL" id="AF294857">
    <property type="protein sequence ID" value="AAM68940.1"/>
    <property type="molecule type" value="Genomic_DNA"/>
</dbReference>
<dbReference type="GO" id="GO:0000786">
    <property type="term" value="C:nucleosome"/>
    <property type="evidence" value="ECO:0007669"/>
    <property type="project" value="UniProtKB-KW"/>
</dbReference>
<dbReference type="GO" id="GO:0005634">
    <property type="term" value="C:nucleus"/>
    <property type="evidence" value="ECO:0007669"/>
    <property type="project" value="UniProtKB-SubCell"/>
</dbReference>
<dbReference type="GO" id="GO:0003677">
    <property type="term" value="F:DNA binding"/>
    <property type="evidence" value="ECO:0007669"/>
    <property type="project" value="UniProtKB-KW"/>
</dbReference>
<dbReference type="GO" id="GO:0030261">
    <property type="term" value="P:chromosome condensation"/>
    <property type="evidence" value="ECO:0007669"/>
    <property type="project" value="UniProtKB-KW"/>
</dbReference>
<dbReference type="GO" id="GO:0035092">
    <property type="term" value="P:sperm DNA condensation"/>
    <property type="evidence" value="ECO:0007669"/>
    <property type="project" value="InterPro"/>
</dbReference>
<dbReference type="InterPro" id="IPR000221">
    <property type="entry name" value="Protamine_P1"/>
</dbReference>
<dbReference type="Pfam" id="PF00260">
    <property type="entry name" value="Protamine_P1"/>
    <property type="match status" value="1"/>
</dbReference>
<dbReference type="PROSITE" id="PS00048">
    <property type="entry name" value="PROTAMINE_P1"/>
    <property type="match status" value="1"/>
</dbReference>
<gene>
    <name type="primary">PRM1</name>
</gene>
<organism>
    <name type="scientific">Trachypithecus geei</name>
    <name type="common">Golden langur</name>
    <name type="synonym">Golden leaf monkey</name>
    <dbReference type="NCBI Taxonomy" id="164650"/>
    <lineage>
        <taxon>Eukaryota</taxon>
        <taxon>Metazoa</taxon>
        <taxon>Chordata</taxon>
        <taxon>Craniata</taxon>
        <taxon>Vertebrata</taxon>
        <taxon>Euteleostomi</taxon>
        <taxon>Mammalia</taxon>
        <taxon>Eutheria</taxon>
        <taxon>Euarchontoglires</taxon>
        <taxon>Primates</taxon>
        <taxon>Haplorrhini</taxon>
        <taxon>Catarrhini</taxon>
        <taxon>Cercopithecidae</taxon>
        <taxon>Colobinae</taxon>
        <taxon>Trachypithecus</taxon>
    </lineage>
</organism>
<sequence length="51" mass="6785">MARYRCCRSQSRSRCCRPRRRCRRRRRRSCRARRRATRCCRRRYRLRCRRY</sequence>
<evidence type="ECO:0000250" key="1"/>
<evidence type="ECO:0000305" key="2"/>
<comment type="function">
    <text evidence="1">Protamines substitute for histones in the chromatin of sperm during the haploid phase of spermatogenesis. They compact sperm DNA into a highly condensed, stable and inactive complex (By similarity).</text>
</comment>
<comment type="subcellular location">
    <subcellularLocation>
        <location evidence="1">Nucleus</location>
    </subcellularLocation>
    <subcellularLocation>
        <location evidence="1">Chromosome</location>
    </subcellularLocation>
</comment>
<comment type="tissue specificity">
    <text>Testis.</text>
</comment>
<comment type="similarity">
    <text evidence="2">Belongs to the protamine P1 family.</text>
</comment>
<protein>
    <recommendedName>
        <fullName>Sperm protamine P1</fullName>
    </recommendedName>
</protein>